<feature type="chain" id="PRO_0000142292" description="Uncharacterized protein MJ0703">
    <location>
        <begin position="1"/>
        <end position="226"/>
    </location>
</feature>
<proteinExistence type="inferred from homology"/>
<protein>
    <recommendedName>
        <fullName>Uncharacterized protein MJ0703</fullName>
    </recommendedName>
</protein>
<keyword id="KW-1185">Reference proteome</keyword>
<sequence>MKIIPVIDLKDKIAVHGKSGNRDEYKPLESVICKSSNPIEVAKAYKERGAKTIYIADLNFIMGNGDNFDIIKEIDFINKIVDIGVKSREDLETIKKVLNKDDRAIVATETLKDIELLKEKDIVVSLDFKNGNLLNYSLDEILSCVRDDTPLIILDISSVGTQRGVNAELIKYVLDKTNNPVYVGGGIKGMEDLELCYNLGVDAVLIATAIHKGVLDLEEIINKFGD</sequence>
<gene>
    <name type="ordered locus">MJ0703</name>
</gene>
<organism>
    <name type="scientific">Methanocaldococcus jannaschii (strain ATCC 43067 / DSM 2661 / JAL-1 / JCM 10045 / NBRC 100440)</name>
    <name type="common">Methanococcus jannaschii</name>
    <dbReference type="NCBI Taxonomy" id="243232"/>
    <lineage>
        <taxon>Archaea</taxon>
        <taxon>Methanobacteriati</taxon>
        <taxon>Methanobacteriota</taxon>
        <taxon>Methanomada group</taxon>
        <taxon>Methanococci</taxon>
        <taxon>Methanococcales</taxon>
        <taxon>Methanocaldococcaceae</taxon>
        <taxon>Methanocaldococcus</taxon>
    </lineage>
</organism>
<reference key="1">
    <citation type="journal article" date="1996" name="Science">
        <title>Complete genome sequence of the methanogenic archaeon, Methanococcus jannaschii.</title>
        <authorList>
            <person name="Bult C.J."/>
            <person name="White O."/>
            <person name="Olsen G.J."/>
            <person name="Zhou L."/>
            <person name="Fleischmann R.D."/>
            <person name="Sutton G.G."/>
            <person name="Blake J.A."/>
            <person name="FitzGerald L.M."/>
            <person name="Clayton R.A."/>
            <person name="Gocayne J.D."/>
            <person name="Kerlavage A.R."/>
            <person name="Dougherty B.A."/>
            <person name="Tomb J.-F."/>
            <person name="Adams M.D."/>
            <person name="Reich C.I."/>
            <person name="Overbeek R."/>
            <person name="Kirkness E.F."/>
            <person name="Weinstock K.G."/>
            <person name="Merrick J.M."/>
            <person name="Glodek A."/>
            <person name="Scott J.L."/>
            <person name="Geoghagen N.S.M."/>
            <person name="Weidman J.F."/>
            <person name="Fuhrmann J.L."/>
            <person name="Nguyen D."/>
            <person name="Utterback T.R."/>
            <person name="Kelley J.M."/>
            <person name="Peterson J.D."/>
            <person name="Sadow P.W."/>
            <person name="Hanna M.C."/>
            <person name="Cotton M.D."/>
            <person name="Roberts K.M."/>
            <person name="Hurst M.A."/>
            <person name="Kaine B.P."/>
            <person name="Borodovsky M."/>
            <person name="Klenk H.-P."/>
            <person name="Fraser C.M."/>
            <person name="Smith H.O."/>
            <person name="Woese C.R."/>
            <person name="Venter J.C."/>
        </authorList>
    </citation>
    <scope>NUCLEOTIDE SEQUENCE [LARGE SCALE GENOMIC DNA]</scope>
    <source>
        <strain>ATCC 43067 / DSM 2661 / JAL-1 / JCM 10045 / NBRC 100440</strain>
    </source>
</reference>
<comment type="similarity">
    <text evidence="1">Belongs to the HisA/HisF family.</text>
</comment>
<name>Y703_METJA</name>
<dbReference type="EMBL" id="L77117">
    <property type="protein sequence ID" value="AAB98695.1"/>
    <property type="molecule type" value="Genomic_DNA"/>
</dbReference>
<dbReference type="PIR" id="G64387">
    <property type="entry name" value="G64387"/>
</dbReference>
<dbReference type="RefSeq" id="WP_010870208.1">
    <property type="nucleotide sequence ID" value="NC_000909.1"/>
</dbReference>
<dbReference type="SMR" id="Q58114"/>
<dbReference type="FunCoup" id="Q58114">
    <property type="interactions" value="118"/>
</dbReference>
<dbReference type="STRING" id="243232.MJ_0703"/>
<dbReference type="PaxDb" id="243232-MJ_0703"/>
<dbReference type="EnsemblBacteria" id="AAB98695">
    <property type="protein sequence ID" value="AAB98695"/>
    <property type="gene ID" value="MJ_0703"/>
</dbReference>
<dbReference type="GeneID" id="1451570"/>
<dbReference type="KEGG" id="mja:MJ_0703"/>
<dbReference type="eggNOG" id="arCOG00616">
    <property type="taxonomic scope" value="Archaea"/>
</dbReference>
<dbReference type="HOGENOM" id="CLU_048577_2_0_2"/>
<dbReference type="InParanoid" id="Q58114"/>
<dbReference type="OrthoDB" id="146815at2157"/>
<dbReference type="PhylomeDB" id="Q58114"/>
<dbReference type="Proteomes" id="UP000000805">
    <property type="component" value="Chromosome"/>
</dbReference>
<dbReference type="GO" id="GO:0005737">
    <property type="term" value="C:cytoplasm"/>
    <property type="evidence" value="ECO:0000318"/>
    <property type="project" value="GO_Central"/>
</dbReference>
<dbReference type="GO" id="GO:0003949">
    <property type="term" value="F:1-(5-phosphoribosyl)-5-[(5-phosphoribosylamino)methylideneamino]imidazole-4-carboxamide isomerase activity"/>
    <property type="evidence" value="ECO:0000318"/>
    <property type="project" value="GO_Central"/>
</dbReference>
<dbReference type="GO" id="GO:0000105">
    <property type="term" value="P:L-histidine biosynthetic process"/>
    <property type="evidence" value="ECO:0000318"/>
    <property type="project" value="GO_Central"/>
</dbReference>
<dbReference type="CDD" id="cd04723">
    <property type="entry name" value="HisA_HisF"/>
    <property type="match status" value="1"/>
</dbReference>
<dbReference type="Gene3D" id="3.20.20.70">
    <property type="entry name" value="Aldolase class I"/>
    <property type="match status" value="1"/>
</dbReference>
<dbReference type="InterPro" id="IPR013785">
    <property type="entry name" value="Aldolase_TIM"/>
</dbReference>
<dbReference type="InterPro" id="IPR006062">
    <property type="entry name" value="His_biosynth"/>
</dbReference>
<dbReference type="InterPro" id="IPR004650">
    <property type="entry name" value="HisA/F-archaeal"/>
</dbReference>
<dbReference type="InterPro" id="IPR044524">
    <property type="entry name" value="Isoase_HisA-like"/>
</dbReference>
<dbReference type="InterPro" id="IPR011060">
    <property type="entry name" value="RibuloseP-bd_barrel"/>
</dbReference>
<dbReference type="NCBIfam" id="TIGR00734">
    <property type="entry name" value="hisAF_rel"/>
    <property type="match status" value="1"/>
</dbReference>
<dbReference type="PANTHER" id="PTHR43090">
    <property type="entry name" value="1-(5-PHOSPHORIBOSYL)-5-[(5-PHOSPHORIBOSYLAMINO)METHYLIDENEAMINO] IMIDAZOLE-4-CARBOXAMIDE ISOMERASE"/>
    <property type="match status" value="1"/>
</dbReference>
<dbReference type="PANTHER" id="PTHR43090:SF2">
    <property type="entry name" value="1-(5-PHOSPHORIBOSYL)-5-[(5-PHOSPHORIBOSYLAMINO)METHYLIDENEAMINO] IMIDAZOLE-4-CARBOXAMIDE ISOMERASE"/>
    <property type="match status" value="1"/>
</dbReference>
<dbReference type="Pfam" id="PF00977">
    <property type="entry name" value="His_biosynth"/>
    <property type="match status" value="1"/>
</dbReference>
<dbReference type="SUPFAM" id="SSF51366">
    <property type="entry name" value="Ribulose-phoshate binding barrel"/>
    <property type="match status" value="1"/>
</dbReference>
<accession>Q58114</accession>
<evidence type="ECO:0000305" key="1"/>